<protein>
    <recommendedName>
        <fullName evidence="2">Probable peptidoglycan glycosyltransferase FtsW</fullName>
        <shortName evidence="2">PGT</shortName>
        <ecNumber evidence="2">2.4.99.28</ecNumber>
    </recommendedName>
    <alternativeName>
        <fullName evidence="2">Cell division protein FtsW</fullName>
    </alternativeName>
    <alternativeName>
        <fullName evidence="2">Cell wall polymerase</fullName>
    </alternativeName>
    <alternativeName>
        <fullName evidence="2">Peptidoglycan polymerase</fullName>
        <shortName evidence="2">PG polymerase</shortName>
    </alternativeName>
</protein>
<organism>
    <name type="scientific">Dichelobacter nodosus (strain VCS1703A)</name>
    <dbReference type="NCBI Taxonomy" id="246195"/>
    <lineage>
        <taxon>Bacteria</taxon>
        <taxon>Pseudomonadati</taxon>
        <taxon>Pseudomonadota</taxon>
        <taxon>Gammaproteobacteria</taxon>
        <taxon>Cardiobacteriales</taxon>
        <taxon>Cardiobacteriaceae</taxon>
        <taxon>Dichelobacter</taxon>
    </lineage>
</organism>
<sequence length="397" mass="44180">MSPRNSALERFRQHQKIPEKRWQRLAFPDVGLLLCWLALIVIGMVMVTSSSLSEAHVERLSTHHFAIRQGIFYVGSSIFAYIAFMLGTNFYREKAKFILGLAFLGLLLVYAPGIGVVVNGSRRWLNLGVINLQVGEFAKLAVFIFTAAYLQHHTQRLDHSWQPIIGLLAVTACFALMFYLQPDFGTMVVIVATVLGMLFLSGVSIWRLLLLGVLIAPAMVWVLISESYRLRRLTTFINPWEYQYDEGYQLVNSLISFGRGGLFGVGLGESVQKHQYLPEAHTDFIFSIIAEETGLVGALIVMAILMILVWRAFAIGYLADRMRKRFSSLLAYGIGLWLGLQSLINIGVTTGALPTKGLTLPLISYGGSSILMTSIALAILARIDAESRFIARLEGKI</sequence>
<name>FTSW_DICNV</name>
<reference key="1">
    <citation type="journal article" date="2007" name="Nat. Biotechnol.">
        <title>Genome sequence and identification of candidate vaccine antigens from the animal pathogen Dichelobacter nodosus.</title>
        <authorList>
            <person name="Myers G.S.A."/>
            <person name="Parker D."/>
            <person name="Al-Hasani K."/>
            <person name="Kennan R.M."/>
            <person name="Seemann T."/>
            <person name="Ren Q."/>
            <person name="Badger J.H."/>
            <person name="Selengut J.D."/>
            <person name="Deboy R.T."/>
            <person name="Tettelin H."/>
            <person name="Boyce J.D."/>
            <person name="McCarl V.P."/>
            <person name="Han X."/>
            <person name="Nelson W.C."/>
            <person name="Madupu R."/>
            <person name="Mohamoud Y."/>
            <person name="Holley T."/>
            <person name="Fedorova N."/>
            <person name="Khouri H."/>
            <person name="Bottomley S.P."/>
            <person name="Whittington R.J."/>
            <person name="Adler B."/>
            <person name="Songer J.G."/>
            <person name="Rood J.I."/>
            <person name="Paulsen I.T."/>
        </authorList>
    </citation>
    <scope>NUCLEOTIDE SEQUENCE [LARGE SCALE GENOMIC DNA]</scope>
    <source>
        <strain>VCS1703A</strain>
    </source>
</reference>
<accession>A5EY04</accession>
<evidence type="ECO:0000255" key="1"/>
<evidence type="ECO:0000255" key="2">
    <source>
        <dbReference type="HAMAP-Rule" id="MF_00913"/>
    </source>
</evidence>
<dbReference type="EC" id="2.4.99.28" evidence="2"/>
<dbReference type="EMBL" id="CP000513">
    <property type="protein sequence ID" value="ABQ13977.1"/>
    <property type="molecule type" value="Genomic_DNA"/>
</dbReference>
<dbReference type="RefSeq" id="WP_012031295.1">
    <property type="nucleotide sequence ID" value="NC_009446.1"/>
</dbReference>
<dbReference type="SMR" id="A5EY04"/>
<dbReference type="STRING" id="246195.DNO_0982"/>
<dbReference type="KEGG" id="dno:DNO_0982"/>
<dbReference type="eggNOG" id="COG0772">
    <property type="taxonomic scope" value="Bacteria"/>
</dbReference>
<dbReference type="HOGENOM" id="CLU_029243_1_1_6"/>
<dbReference type="OrthoDB" id="9768187at2"/>
<dbReference type="UniPathway" id="UPA00219"/>
<dbReference type="Proteomes" id="UP000000248">
    <property type="component" value="Chromosome"/>
</dbReference>
<dbReference type="GO" id="GO:0032153">
    <property type="term" value="C:cell division site"/>
    <property type="evidence" value="ECO:0007669"/>
    <property type="project" value="UniProtKB-UniRule"/>
</dbReference>
<dbReference type="GO" id="GO:0005886">
    <property type="term" value="C:plasma membrane"/>
    <property type="evidence" value="ECO:0007669"/>
    <property type="project" value="UniProtKB-SubCell"/>
</dbReference>
<dbReference type="GO" id="GO:0015648">
    <property type="term" value="F:lipid-linked peptidoglycan transporter activity"/>
    <property type="evidence" value="ECO:0007669"/>
    <property type="project" value="TreeGrafter"/>
</dbReference>
<dbReference type="GO" id="GO:0008955">
    <property type="term" value="F:peptidoglycan glycosyltransferase activity"/>
    <property type="evidence" value="ECO:0007669"/>
    <property type="project" value="UniProtKB-UniRule"/>
</dbReference>
<dbReference type="GO" id="GO:0071555">
    <property type="term" value="P:cell wall organization"/>
    <property type="evidence" value="ECO:0007669"/>
    <property type="project" value="UniProtKB-KW"/>
</dbReference>
<dbReference type="GO" id="GO:0043093">
    <property type="term" value="P:FtsZ-dependent cytokinesis"/>
    <property type="evidence" value="ECO:0007669"/>
    <property type="project" value="UniProtKB-UniRule"/>
</dbReference>
<dbReference type="GO" id="GO:0009252">
    <property type="term" value="P:peptidoglycan biosynthetic process"/>
    <property type="evidence" value="ECO:0007669"/>
    <property type="project" value="UniProtKB-UniRule"/>
</dbReference>
<dbReference type="GO" id="GO:0008360">
    <property type="term" value="P:regulation of cell shape"/>
    <property type="evidence" value="ECO:0007669"/>
    <property type="project" value="UniProtKB-KW"/>
</dbReference>
<dbReference type="HAMAP" id="MF_00913">
    <property type="entry name" value="PGT_FtsW_proteobact"/>
    <property type="match status" value="1"/>
</dbReference>
<dbReference type="InterPro" id="IPR018365">
    <property type="entry name" value="Cell_cycle_FtsW-rel_CS"/>
</dbReference>
<dbReference type="InterPro" id="IPR013437">
    <property type="entry name" value="FtsW"/>
</dbReference>
<dbReference type="InterPro" id="IPR001182">
    <property type="entry name" value="FtsW/RodA"/>
</dbReference>
<dbReference type="NCBIfam" id="TIGR02614">
    <property type="entry name" value="ftsW"/>
    <property type="match status" value="1"/>
</dbReference>
<dbReference type="PANTHER" id="PTHR30474">
    <property type="entry name" value="CELL CYCLE PROTEIN"/>
    <property type="match status" value="1"/>
</dbReference>
<dbReference type="PANTHER" id="PTHR30474:SF2">
    <property type="entry name" value="PEPTIDOGLYCAN GLYCOSYLTRANSFERASE FTSW-RELATED"/>
    <property type="match status" value="1"/>
</dbReference>
<dbReference type="Pfam" id="PF01098">
    <property type="entry name" value="FTSW_RODA_SPOVE"/>
    <property type="match status" value="1"/>
</dbReference>
<dbReference type="PROSITE" id="PS00428">
    <property type="entry name" value="FTSW_RODA_SPOVE"/>
    <property type="match status" value="1"/>
</dbReference>
<keyword id="KW-0131">Cell cycle</keyword>
<keyword id="KW-0132">Cell division</keyword>
<keyword id="KW-0997">Cell inner membrane</keyword>
<keyword id="KW-1003">Cell membrane</keyword>
<keyword id="KW-0133">Cell shape</keyword>
<keyword id="KW-0961">Cell wall biogenesis/degradation</keyword>
<keyword id="KW-0328">Glycosyltransferase</keyword>
<keyword id="KW-0472">Membrane</keyword>
<keyword id="KW-0573">Peptidoglycan synthesis</keyword>
<keyword id="KW-1185">Reference proteome</keyword>
<keyword id="KW-0808">Transferase</keyword>
<keyword id="KW-0812">Transmembrane</keyword>
<keyword id="KW-1133">Transmembrane helix</keyword>
<proteinExistence type="inferred from homology"/>
<gene>
    <name evidence="2" type="primary">ftsW</name>
    <name type="ordered locus">DNO_0982</name>
</gene>
<feature type="chain" id="PRO_0000415180" description="Probable peptidoglycan glycosyltransferase FtsW">
    <location>
        <begin position="1"/>
        <end position="397"/>
    </location>
</feature>
<feature type="topological domain" description="Cytoplasmic" evidence="1">
    <location>
        <begin position="1"/>
        <end position="26"/>
    </location>
</feature>
<feature type="transmembrane region" description="Helical" evidence="2">
    <location>
        <begin position="27"/>
        <end position="47"/>
    </location>
</feature>
<feature type="topological domain" description="Periplasmic" evidence="1">
    <location>
        <begin position="48"/>
        <end position="69"/>
    </location>
</feature>
<feature type="transmembrane region" description="Helical" evidence="2">
    <location>
        <begin position="70"/>
        <end position="90"/>
    </location>
</feature>
<feature type="topological domain" description="Cytoplasmic" evidence="1">
    <location>
        <begin position="91"/>
        <end position="96"/>
    </location>
</feature>
<feature type="transmembrane region" description="Helical" evidence="2">
    <location>
        <begin position="97"/>
        <end position="117"/>
    </location>
</feature>
<feature type="topological domain" description="Periplasmic" evidence="1">
    <location>
        <begin position="118"/>
        <end position="126"/>
    </location>
</feature>
<feature type="transmembrane region" description="Helical" evidence="2">
    <location>
        <begin position="127"/>
        <end position="147"/>
    </location>
</feature>
<feature type="topological domain" description="Cytoplasmic" evidence="1">
    <location>
        <begin position="148"/>
        <end position="159"/>
    </location>
</feature>
<feature type="transmembrane region" description="Helical" evidence="2">
    <location>
        <begin position="160"/>
        <end position="180"/>
    </location>
</feature>
<feature type="topological domain" description="Periplasmic" evidence="1">
    <location>
        <begin position="181"/>
        <end position="185"/>
    </location>
</feature>
<feature type="transmembrane region" description="Helical" evidence="2">
    <location>
        <begin position="186"/>
        <end position="206"/>
    </location>
</feature>
<feature type="topological domain" description="Cytoplasmic" evidence="1">
    <location>
        <position position="207"/>
    </location>
</feature>
<feature type="transmembrane region" description="Helical" evidence="2">
    <location>
        <begin position="208"/>
        <end position="228"/>
    </location>
</feature>
<feature type="topological domain" description="Periplasmic" evidence="1">
    <location>
        <begin position="229"/>
        <end position="294"/>
    </location>
</feature>
<feature type="transmembrane region" description="Helical" evidence="2">
    <location>
        <begin position="295"/>
        <end position="315"/>
    </location>
</feature>
<feature type="topological domain" description="Cytoplasmic" evidence="1">
    <location>
        <begin position="316"/>
        <end position="328"/>
    </location>
</feature>
<feature type="transmembrane region" description="Helical" evidence="2">
    <location>
        <begin position="329"/>
        <end position="349"/>
    </location>
</feature>
<feature type="topological domain" description="Periplasmic" evidence="1">
    <location>
        <begin position="350"/>
        <end position="359"/>
    </location>
</feature>
<feature type="transmembrane region" description="Helical" evidence="2">
    <location>
        <begin position="360"/>
        <end position="380"/>
    </location>
</feature>
<feature type="topological domain" description="Cytoplasmic" evidence="1">
    <location>
        <begin position="381"/>
        <end position="397"/>
    </location>
</feature>
<comment type="function">
    <text evidence="2">Peptidoglycan polymerase that is essential for cell division.</text>
</comment>
<comment type="catalytic activity">
    <reaction evidence="2">
        <text>[GlcNAc-(1-&gt;4)-Mur2Ac(oyl-L-Ala-gamma-D-Glu-L-Lys-D-Ala-D-Ala)](n)-di-trans,octa-cis-undecaprenyl diphosphate + beta-D-GlcNAc-(1-&gt;4)-Mur2Ac(oyl-L-Ala-gamma-D-Glu-L-Lys-D-Ala-D-Ala)-di-trans,octa-cis-undecaprenyl diphosphate = [GlcNAc-(1-&gt;4)-Mur2Ac(oyl-L-Ala-gamma-D-Glu-L-Lys-D-Ala-D-Ala)](n+1)-di-trans,octa-cis-undecaprenyl diphosphate + di-trans,octa-cis-undecaprenyl diphosphate + H(+)</text>
        <dbReference type="Rhea" id="RHEA:23708"/>
        <dbReference type="Rhea" id="RHEA-COMP:9602"/>
        <dbReference type="Rhea" id="RHEA-COMP:9603"/>
        <dbReference type="ChEBI" id="CHEBI:15378"/>
        <dbReference type="ChEBI" id="CHEBI:58405"/>
        <dbReference type="ChEBI" id="CHEBI:60033"/>
        <dbReference type="ChEBI" id="CHEBI:78435"/>
        <dbReference type="EC" id="2.4.99.28"/>
    </reaction>
</comment>
<comment type="pathway">
    <text evidence="2">Cell wall biogenesis; peptidoglycan biosynthesis.</text>
</comment>
<comment type="subcellular location">
    <subcellularLocation>
        <location evidence="2">Cell inner membrane</location>
        <topology evidence="2">Multi-pass membrane protein</topology>
    </subcellularLocation>
    <text evidence="2">Localizes to the division septum.</text>
</comment>
<comment type="similarity">
    <text evidence="2">Belongs to the SEDS family. FtsW subfamily.</text>
</comment>